<evidence type="ECO:0000255" key="1">
    <source>
        <dbReference type="HAMAP-Rule" id="MF_01325"/>
    </source>
</evidence>
<evidence type="ECO:0000256" key="2">
    <source>
        <dbReference type="SAM" id="MobiDB-lite"/>
    </source>
</evidence>
<evidence type="ECO:0000305" key="3"/>
<feature type="chain" id="PRO_0000077146" description="Large ribosomal subunit protein uL3">
    <location>
        <begin position="1"/>
        <end position="215"/>
    </location>
</feature>
<feature type="region of interest" description="Disordered" evidence="2">
    <location>
        <begin position="136"/>
        <end position="155"/>
    </location>
</feature>
<feature type="modified residue" description="N5-methylglutamine" evidence="1">
    <location>
        <position position="151"/>
    </location>
</feature>
<accession>Q92GW6</accession>
<sequence>MRTGIIAQKIGMTSVFNDKGERISLTLVKVDDCQVVGHKTLEKHGYNALVIGVKDKKISRVTKPMRQVFANAKISPKTKLKEFRISEENFIDIAASLEVDHFTAGQFVDITATTIGKGFAGSMKRHNFRGLEASHGVSISHRSHGSTGQRQDPGKVFKGKKMAGHMGCNKVTIQNLKIFAVDKERKLIMIQGSIPGHKNSYLSVKDAIKKISITV</sequence>
<organism>
    <name type="scientific">Rickettsia conorii (strain ATCC VR-613 / Malish 7)</name>
    <dbReference type="NCBI Taxonomy" id="272944"/>
    <lineage>
        <taxon>Bacteria</taxon>
        <taxon>Pseudomonadati</taxon>
        <taxon>Pseudomonadota</taxon>
        <taxon>Alphaproteobacteria</taxon>
        <taxon>Rickettsiales</taxon>
        <taxon>Rickettsiaceae</taxon>
        <taxon>Rickettsieae</taxon>
        <taxon>Rickettsia</taxon>
        <taxon>spotted fever group</taxon>
    </lineage>
</organism>
<comment type="function">
    <text evidence="1">One of the primary rRNA binding proteins, it binds directly near the 3'-end of the 23S rRNA, where it nucleates assembly of the 50S subunit.</text>
</comment>
<comment type="subunit">
    <text evidence="1">Part of the 50S ribosomal subunit. Forms a cluster with proteins L14 and L19.</text>
</comment>
<comment type="PTM">
    <text evidence="1">Methylated by PrmB.</text>
</comment>
<comment type="similarity">
    <text evidence="1">Belongs to the universal ribosomal protein uL3 family.</text>
</comment>
<protein>
    <recommendedName>
        <fullName evidence="1">Large ribosomal subunit protein uL3</fullName>
    </recommendedName>
    <alternativeName>
        <fullName evidence="3">50S ribosomal protein L3</fullName>
    </alternativeName>
</protein>
<proteinExistence type="inferred from homology"/>
<gene>
    <name evidence="1" type="primary">rplC</name>
    <name type="ordered locus">RC1006</name>
</gene>
<name>RL3_RICCN</name>
<keyword id="KW-0488">Methylation</keyword>
<keyword id="KW-0687">Ribonucleoprotein</keyword>
<keyword id="KW-0689">Ribosomal protein</keyword>
<keyword id="KW-0694">RNA-binding</keyword>
<keyword id="KW-0699">rRNA-binding</keyword>
<dbReference type="EMBL" id="AE006914">
    <property type="protein sequence ID" value="AAL03544.1"/>
    <property type="molecule type" value="Genomic_DNA"/>
</dbReference>
<dbReference type="PIR" id="F97825">
    <property type="entry name" value="F97825"/>
</dbReference>
<dbReference type="RefSeq" id="WP_010977587.1">
    <property type="nucleotide sequence ID" value="NC_003103.1"/>
</dbReference>
<dbReference type="SMR" id="Q92GW6"/>
<dbReference type="GeneID" id="928148"/>
<dbReference type="KEGG" id="rco:RC1006"/>
<dbReference type="PATRIC" id="fig|272944.4.peg.1146"/>
<dbReference type="HOGENOM" id="CLU_044142_2_0_5"/>
<dbReference type="Proteomes" id="UP000000816">
    <property type="component" value="Chromosome"/>
</dbReference>
<dbReference type="GO" id="GO:1990904">
    <property type="term" value="C:ribonucleoprotein complex"/>
    <property type="evidence" value="ECO:0007669"/>
    <property type="project" value="UniProtKB-KW"/>
</dbReference>
<dbReference type="GO" id="GO:0005840">
    <property type="term" value="C:ribosome"/>
    <property type="evidence" value="ECO:0007669"/>
    <property type="project" value="UniProtKB-KW"/>
</dbReference>
<dbReference type="GO" id="GO:0019843">
    <property type="term" value="F:rRNA binding"/>
    <property type="evidence" value="ECO:0007669"/>
    <property type="project" value="UniProtKB-UniRule"/>
</dbReference>
<dbReference type="GO" id="GO:0003735">
    <property type="term" value="F:structural constituent of ribosome"/>
    <property type="evidence" value="ECO:0007669"/>
    <property type="project" value="InterPro"/>
</dbReference>
<dbReference type="GO" id="GO:0006412">
    <property type="term" value="P:translation"/>
    <property type="evidence" value="ECO:0007669"/>
    <property type="project" value="UniProtKB-UniRule"/>
</dbReference>
<dbReference type="FunFam" id="2.40.30.10:FF:000004">
    <property type="entry name" value="50S ribosomal protein L3"/>
    <property type="match status" value="1"/>
</dbReference>
<dbReference type="Gene3D" id="3.30.160.810">
    <property type="match status" value="1"/>
</dbReference>
<dbReference type="Gene3D" id="2.40.30.10">
    <property type="entry name" value="Translation factors"/>
    <property type="match status" value="1"/>
</dbReference>
<dbReference type="HAMAP" id="MF_01325_B">
    <property type="entry name" value="Ribosomal_uL3_B"/>
    <property type="match status" value="1"/>
</dbReference>
<dbReference type="InterPro" id="IPR000597">
    <property type="entry name" value="Ribosomal_uL3"/>
</dbReference>
<dbReference type="InterPro" id="IPR019927">
    <property type="entry name" value="Ribosomal_uL3_bac/org-type"/>
</dbReference>
<dbReference type="InterPro" id="IPR019926">
    <property type="entry name" value="Ribosomal_uL3_CS"/>
</dbReference>
<dbReference type="InterPro" id="IPR009000">
    <property type="entry name" value="Transl_B-barrel_sf"/>
</dbReference>
<dbReference type="NCBIfam" id="TIGR03625">
    <property type="entry name" value="L3_bact"/>
    <property type="match status" value="1"/>
</dbReference>
<dbReference type="PANTHER" id="PTHR11229">
    <property type="entry name" value="50S RIBOSOMAL PROTEIN L3"/>
    <property type="match status" value="1"/>
</dbReference>
<dbReference type="PANTHER" id="PTHR11229:SF16">
    <property type="entry name" value="LARGE RIBOSOMAL SUBUNIT PROTEIN UL3C"/>
    <property type="match status" value="1"/>
</dbReference>
<dbReference type="Pfam" id="PF00297">
    <property type="entry name" value="Ribosomal_L3"/>
    <property type="match status" value="1"/>
</dbReference>
<dbReference type="SUPFAM" id="SSF50447">
    <property type="entry name" value="Translation proteins"/>
    <property type="match status" value="1"/>
</dbReference>
<dbReference type="PROSITE" id="PS00474">
    <property type="entry name" value="RIBOSOMAL_L3"/>
    <property type="match status" value="1"/>
</dbReference>
<reference key="1">
    <citation type="journal article" date="2001" name="Science">
        <title>Mechanisms of evolution in Rickettsia conorii and R. prowazekii.</title>
        <authorList>
            <person name="Ogata H."/>
            <person name="Audic S."/>
            <person name="Renesto-Audiffren P."/>
            <person name="Fournier P.-E."/>
            <person name="Barbe V."/>
            <person name="Samson D."/>
            <person name="Roux V."/>
            <person name="Cossart P."/>
            <person name="Weissenbach J."/>
            <person name="Claverie J.-M."/>
            <person name="Raoult D."/>
        </authorList>
    </citation>
    <scope>NUCLEOTIDE SEQUENCE [LARGE SCALE GENOMIC DNA]</scope>
    <source>
        <strain>ATCC VR-613 / Malish 7</strain>
    </source>
</reference>